<feature type="chain" id="PRO_0000416476" description="Ribosome modulation factor">
    <location>
        <begin position="1"/>
        <end position="70"/>
    </location>
</feature>
<dbReference type="EMBL" id="CP001978">
    <property type="protein sequence ID" value="ADP97142.1"/>
    <property type="status" value="ALT_INIT"/>
    <property type="molecule type" value="Genomic_DNA"/>
</dbReference>
<dbReference type="RefSeq" id="WP_008172042.1">
    <property type="nucleotide sequence ID" value="NC_017506.1"/>
</dbReference>
<dbReference type="SMR" id="E4PJF6"/>
<dbReference type="STRING" id="225937.HP15_1378"/>
<dbReference type="KEGG" id="mad:HP15_1378"/>
<dbReference type="PATRIC" id="fig|225937.3.peg.1385"/>
<dbReference type="eggNOG" id="COG3130">
    <property type="taxonomic scope" value="Bacteria"/>
</dbReference>
<dbReference type="HOGENOM" id="CLU_203350_0_0_6"/>
<dbReference type="Proteomes" id="UP000007077">
    <property type="component" value="Chromosome"/>
</dbReference>
<dbReference type="GO" id="GO:0005737">
    <property type="term" value="C:cytoplasm"/>
    <property type="evidence" value="ECO:0007669"/>
    <property type="project" value="UniProtKB-SubCell"/>
</dbReference>
<dbReference type="GO" id="GO:0006417">
    <property type="term" value="P:regulation of translation"/>
    <property type="evidence" value="ECO:0007669"/>
    <property type="project" value="UniProtKB-UniRule"/>
</dbReference>
<dbReference type="Gene3D" id="1.10.10.620">
    <property type="entry name" value="ribosome modulation factor like domain"/>
    <property type="match status" value="1"/>
</dbReference>
<dbReference type="HAMAP" id="MF_00919">
    <property type="entry name" value="RMF"/>
    <property type="match status" value="1"/>
</dbReference>
<dbReference type="InterPro" id="IPR007040">
    <property type="entry name" value="Ribosome_modulation_factor"/>
</dbReference>
<dbReference type="InterPro" id="IPR023200">
    <property type="entry name" value="RMF_sf"/>
</dbReference>
<dbReference type="NCBIfam" id="NF011162">
    <property type="entry name" value="PRK14563.1"/>
    <property type="match status" value="1"/>
</dbReference>
<dbReference type="NCBIfam" id="NF041886">
    <property type="entry name" value="Rmf_CrpP_fam"/>
    <property type="match status" value="1"/>
</dbReference>
<dbReference type="Pfam" id="PF04957">
    <property type="entry name" value="RMF"/>
    <property type="match status" value="1"/>
</dbReference>
<keyword id="KW-0963">Cytoplasm</keyword>
<keyword id="KW-0810">Translation regulation</keyword>
<organism>
    <name type="scientific">Marinobacter adhaerens (strain DSM 23420 / HP15)</name>
    <dbReference type="NCBI Taxonomy" id="225937"/>
    <lineage>
        <taxon>Bacteria</taxon>
        <taxon>Pseudomonadati</taxon>
        <taxon>Pseudomonadota</taxon>
        <taxon>Gammaproteobacteria</taxon>
        <taxon>Pseudomonadales</taxon>
        <taxon>Marinobacteraceae</taxon>
        <taxon>Marinobacter</taxon>
    </lineage>
</organism>
<evidence type="ECO:0000255" key="1">
    <source>
        <dbReference type="HAMAP-Rule" id="MF_00919"/>
    </source>
</evidence>
<evidence type="ECO:0000305" key="2"/>
<comment type="function">
    <text evidence="1">During stationary phase, converts 70S ribosomes to an inactive dimeric form (100S ribosomes).</text>
</comment>
<comment type="subcellular location">
    <subcellularLocation>
        <location evidence="1">Cytoplasm</location>
    </subcellularLocation>
</comment>
<comment type="similarity">
    <text evidence="1">Belongs to the ribosome modulation factor family.</text>
</comment>
<comment type="sequence caution" evidence="2">
    <conflict type="erroneous initiation">
        <sequence resource="EMBL-CDS" id="ADP97142"/>
    </conflict>
    <text>Truncated N-terminus.</text>
</comment>
<gene>
    <name evidence="1" type="primary">rmf</name>
    <name type="ordered locus">HP15_1378</name>
</gene>
<protein>
    <recommendedName>
        <fullName evidence="1">Ribosome modulation factor</fullName>
        <shortName evidence="1">RMF</shortName>
    </recommendedName>
</protein>
<reference key="1">
    <citation type="submission" date="2010-02" db="EMBL/GenBank/DDBJ databases">
        <title>Complete genome sequence of Marinobacter adhaerens type strain (HP15).</title>
        <authorList>
            <person name="Gaerdes A.A.M."/>
            <person name="Kaeppel E."/>
            <person name="Shezad A."/>
            <person name="Seebah S."/>
            <person name="Teeling H."/>
            <person name="Yarza P."/>
            <person name="Gloeckner F.O."/>
            <person name="Ullrich M.S."/>
        </authorList>
    </citation>
    <scope>NUCLEOTIDE SEQUENCE [LARGE SCALE GENOMIC DNA]</scope>
    <source>
        <strain>DSM 23420 / HP15</strain>
    </source>
</reference>
<name>RMF_MARAH</name>
<proteinExistence type="inferred from homology"/>
<sequence>MKRQKRDMYARAFKRGYLAGVSGKSKDSCPIEQAEVRQEWLNGWREGRTDQWEGMTGVSGIHKLANVTTA</sequence>
<accession>E4PJF6</accession>